<feature type="chain" id="PRO_0000321629" description="Octanoyltransferase">
    <location>
        <begin position="1"/>
        <end position="220"/>
    </location>
</feature>
<feature type="domain" description="BPL/LPL catalytic" evidence="2">
    <location>
        <begin position="36"/>
        <end position="212"/>
    </location>
</feature>
<feature type="active site" description="Acyl-thioester intermediate" evidence="1">
    <location>
        <position position="173"/>
    </location>
</feature>
<feature type="binding site" evidence="1">
    <location>
        <begin position="75"/>
        <end position="82"/>
    </location>
    <ligand>
        <name>substrate</name>
    </ligand>
</feature>
<feature type="binding site" evidence="1">
    <location>
        <begin position="142"/>
        <end position="144"/>
    </location>
    <ligand>
        <name>substrate</name>
    </ligand>
</feature>
<feature type="binding site" evidence="1">
    <location>
        <begin position="155"/>
        <end position="157"/>
    </location>
    <ligand>
        <name>substrate</name>
    </ligand>
</feature>
<feature type="site" description="Lowers pKa of active site Cys" evidence="1">
    <location>
        <position position="139"/>
    </location>
</feature>
<organism>
    <name type="scientific">Chromohalobacter salexigens (strain ATCC BAA-138 / DSM 3043 / CIP 106854 / NCIMB 13768 / 1H11)</name>
    <dbReference type="NCBI Taxonomy" id="290398"/>
    <lineage>
        <taxon>Bacteria</taxon>
        <taxon>Pseudomonadati</taxon>
        <taxon>Pseudomonadota</taxon>
        <taxon>Gammaproteobacteria</taxon>
        <taxon>Oceanospirillales</taxon>
        <taxon>Halomonadaceae</taxon>
        <taxon>Chromohalobacter</taxon>
    </lineage>
</organism>
<evidence type="ECO:0000255" key="1">
    <source>
        <dbReference type="HAMAP-Rule" id="MF_00013"/>
    </source>
</evidence>
<evidence type="ECO:0000255" key="2">
    <source>
        <dbReference type="PROSITE-ProRule" id="PRU01067"/>
    </source>
</evidence>
<comment type="function">
    <text evidence="1">Catalyzes the transfer of endogenously produced octanoic acid from octanoyl-acyl-carrier-protein onto the lipoyl domains of lipoate-dependent enzymes. Lipoyl-ACP can also act as a substrate although octanoyl-ACP is likely to be the physiological substrate.</text>
</comment>
<comment type="catalytic activity">
    <reaction evidence="1">
        <text>octanoyl-[ACP] + L-lysyl-[protein] = N(6)-octanoyl-L-lysyl-[protein] + holo-[ACP] + H(+)</text>
        <dbReference type="Rhea" id="RHEA:17665"/>
        <dbReference type="Rhea" id="RHEA-COMP:9636"/>
        <dbReference type="Rhea" id="RHEA-COMP:9685"/>
        <dbReference type="Rhea" id="RHEA-COMP:9752"/>
        <dbReference type="Rhea" id="RHEA-COMP:9928"/>
        <dbReference type="ChEBI" id="CHEBI:15378"/>
        <dbReference type="ChEBI" id="CHEBI:29969"/>
        <dbReference type="ChEBI" id="CHEBI:64479"/>
        <dbReference type="ChEBI" id="CHEBI:78463"/>
        <dbReference type="ChEBI" id="CHEBI:78809"/>
        <dbReference type="EC" id="2.3.1.181"/>
    </reaction>
</comment>
<comment type="pathway">
    <text evidence="1">Protein modification; protein lipoylation via endogenous pathway; protein N(6)-(lipoyl)lysine from octanoyl-[acyl-carrier-protein]: step 1/2.</text>
</comment>
<comment type="subcellular location">
    <subcellularLocation>
        <location evidence="1">Cytoplasm</location>
    </subcellularLocation>
</comment>
<comment type="miscellaneous">
    <text evidence="1">In the reaction, the free carboxyl group of octanoic acid is attached via an amide linkage to the epsilon-amino group of a specific lysine residue of lipoyl domains of lipoate-dependent enzymes.</text>
</comment>
<comment type="similarity">
    <text evidence="1">Belongs to the LipB family.</text>
</comment>
<sequence>MAAERGLPPIELHRLGRRPYVPVWQAMREFTDTRDADSPDQFWLVEHDPVFTQGQAGKAEHLLMPGDIPVVATDRGGQVTYHGPGQVVLYPLIDVRRGKLGVRELVSALEQAVIDLLAAHGVTARARPDAPGVYVGETKIASLGLRIRRGASFHGVALNVDGDLAPFQCINPCGHAGMAMTRLVDLVDDCPGCEAVALELAECLARQLGRRLTPMDTVPA</sequence>
<name>LIPB_CHRSD</name>
<accession>Q1QXA4</accession>
<reference key="1">
    <citation type="journal article" date="2011" name="Stand. Genomic Sci.">
        <title>Complete genome sequence of the halophilic and highly halotolerant Chromohalobacter salexigens type strain (1H11(T)).</title>
        <authorList>
            <person name="Copeland A."/>
            <person name="O'Connor K."/>
            <person name="Lucas S."/>
            <person name="Lapidus A."/>
            <person name="Berry K.W."/>
            <person name="Detter J.C."/>
            <person name="Del Rio T.G."/>
            <person name="Hammon N."/>
            <person name="Dalin E."/>
            <person name="Tice H."/>
            <person name="Pitluck S."/>
            <person name="Bruce D."/>
            <person name="Goodwin L."/>
            <person name="Han C."/>
            <person name="Tapia R."/>
            <person name="Saunders E."/>
            <person name="Schmutz J."/>
            <person name="Brettin T."/>
            <person name="Larimer F."/>
            <person name="Land M."/>
            <person name="Hauser L."/>
            <person name="Vargas C."/>
            <person name="Nieto J.J."/>
            <person name="Kyrpides N.C."/>
            <person name="Ivanova N."/>
            <person name="Goker M."/>
            <person name="Klenk H.P."/>
            <person name="Csonka L.N."/>
            <person name="Woyke T."/>
        </authorList>
    </citation>
    <scope>NUCLEOTIDE SEQUENCE [LARGE SCALE GENOMIC DNA]</scope>
    <source>
        <strain>ATCC BAA-138 / DSM 3043 / CIP 106854 / NCIMB 13768 / 1H11</strain>
    </source>
</reference>
<keyword id="KW-0012">Acyltransferase</keyword>
<keyword id="KW-0963">Cytoplasm</keyword>
<keyword id="KW-1185">Reference proteome</keyword>
<keyword id="KW-0808">Transferase</keyword>
<proteinExistence type="inferred from homology"/>
<gene>
    <name evidence="1" type="primary">lipB</name>
    <name type="ordered locus">Csal_1551</name>
</gene>
<dbReference type="EC" id="2.3.1.181" evidence="1"/>
<dbReference type="EMBL" id="CP000285">
    <property type="protein sequence ID" value="ABE58904.1"/>
    <property type="molecule type" value="Genomic_DNA"/>
</dbReference>
<dbReference type="RefSeq" id="WP_011506850.1">
    <property type="nucleotide sequence ID" value="NC_007963.1"/>
</dbReference>
<dbReference type="SMR" id="Q1QXA4"/>
<dbReference type="STRING" id="290398.Csal_1551"/>
<dbReference type="GeneID" id="95334282"/>
<dbReference type="KEGG" id="csa:Csal_1551"/>
<dbReference type="eggNOG" id="COG0321">
    <property type="taxonomic scope" value="Bacteria"/>
</dbReference>
<dbReference type="HOGENOM" id="CLU_035168_3_1_6"/>
<dbReference type="OrthoDB" id="9787061at2"/>
<dbReference type="UniPathway" id="UPA00538">
    <property type="reaction ID" value="UER00592"/>
</dbReference>
<dbReference type="Proteomes" id="UP000000239">
    <property type="component" value="Chromosome"/>
</dbReference>
<dbReference type="GO" id="GO:0005737">
    <property type="term" value="C:cytoplasm"/>
    <property type="evidence" value="ECO:0007669"/>
    <property type="project" value="UniProtKB-SubCell"/>
</dbReference>
<dbReference type="GO" id="GO:0033819">
    <property type="term" value="F:lipoyl(octanoyl) transferase activity"/>
    <property type="evidence" value="ECO:0007669"/>
    <property type="project" value="UniProtKB-EC"/>
</dbReference>
<dbReference type="GO" id="GO:0036211">
    <property type="term" value="P:protein modification process"/>
    <property type="evidence" value="ECO:0007669"/>
    <property type="project" value="InterPro"/>
</dbReference>
<dbReference type="CDD" id="cd16444">
    <property type="entry name" value="LipB"/>
    <property type="match status" value="1"/>
</dbReference>
<dbReference type="FunFam" id="3.30.930.10:FF:000020">
    <property type="entry name" value="Octanoyltransferase"/>
    <property type="match status" value="1"/>
</dbReference>
<dbReference type="Gene3D" id="3.30.930.10">
    <property type="entry name" value="Bira Bifunctional Protein, Domain 2"/>
    <property type="match status" value="1"/>
</dbReference>
<dbReference type="HAMAP" id="MF_00013">
    <property type="entry name" value="LipB"/>
    <property type="match status" value="1"/>
</dbReference>
<dbReference type="InterPro" id="IPR045864">
    <property type="entry name" value="aa-tRNA-synth_II/BPL/LPL"/>
</dbReference>
<dbReference type="InterPro" id="IPR004143">
    <property type="entry name" value="BPL_LPL_catalytic"/>
</dbReference>
<dbReference type="InterPro" id="IPR000544">
    <property type="entry name" value="Octanoyltransferase"/>
</dbReference>
<dbReference type="InterPro" id="IPR020605">
    <property type="entry name" value="Octanoyltransferase_CS"/>
</dbReference>
<dbReference type="NCBIfam" id="TIGR00214">
    <property type="entry name" value="lipB"/>
    <property type="match status" value="1"/>
</dbReference>
<dbReference type="NCBIfam" id="NF010922">
    <property type="entry name" value="PRK14342.1"/>
    <property type="match status" value="1"/>
</dbReference>
<dbReference type="PANTHER" id="PTHR10993:SF7">
    <property type="entry name" value="LIPOYLTRANSFERASE 2, MITOCHONDRIAL-RELATED"/>
    <property type="match status" value="1"/>
</dbReference>
<dbReference type="PANTHER" id="PTHR10993">
    <property type="entry name" value="OCTANOYLTRANSFERASE"/>
    <property type="match status" value="1"/>
</dbReference>
<dbReference type="Pfam" id="PF21948">
    <property type="entry name" value="LplA-B_cat"/>
    <property type="match status" value="1"/>
</dbReference>
<dbReference type="PIRSF" id="PIRSF016262">
    <property type="entry name" value="LPLase"/>
    <property type="match status" value="1"/>
</dbReference>
<dbReference type="SUPFAM" id="SSF55681">
    <property type="entry name" value="Class II aaRS and biotin synthetases"/>
    <property type="match status" value="1"/>
</dbReference>
<dbReference type="PROSITE" id="PS51733">
    <property type="entry name" value="BPL_LPL_CATALYTIC"/>
    <property type="match status" value="1"/>
</dbReference>
<dbReference type="PROSITE" id="PS01313">
    <property type="entry name" value="LIPB"/>
    <property type="match status" value="1"/>
</dbReference>
<protein>
    <recommendedName>
        <fullName evidence="1">Octanoyltransferase</fullName>
        <ecNumber evidence="1">2.3.1.181</ecNumber>
    </recommendedName>
    <alternativeName>
        <fullName evidence="1">Lipoate-protein ligase B</fullName>
    </alternativeName>
    <alternativeName>
        <fullName evidence="1">Lipoyl/octanoyl transferase</fullName>
    </alternativeName>
    <alternativeName>
        <fullName evidence="1">Octanoyl-[acyl-carrier-protein]-protein N-octanoyltransferase</fullName>
    </alternativeName>
</protein>